<reference key="1">
    <citation type="journal article" date="1987" name="J. Cell Biol.">
        <title>Cloning and characterization of mammalian myosin regulatory light chain (RLC) cDNA: the RLC gene is expressed in smooth, sarcomeric, and nonmuscle tissues.</title>
        <authorList>
            <person name="Taubman M.B."/>
            <person name="Grant J.W."/>
            <person name="Nadal-Ginard B."/>
        </authorList>
    </citation>
    <scope>NUCLEOTIDE SEQUENCE</scope>
</reference>
<reference key="2">
    <citation type="journal article" date="1990" name="J. Cell Biol.">
        <title>Mammalian nonsarcomeric myosin regulatory light chains are encoded by two differentially regulated and linked genes.</title>
        <authorList>
            <person name="Grant J.W."/>
            <person name="Taubmann M.B."/>
            <person name="Church S.L."/>
            <person name="Johnson R.L."/>
            <person name="Nadal-Ginard B."/>
        </authorList>
    </citation>
    <scope>NUCLEOTIDE SEQUENCE [GENOMIC DNA]</scope>
    <source>
        <strain>Fischer</strain>
    </source>
</reference>
<reference key="3">
    <citation type="journal article" date="1991" name="Brain Res. Mol. Brain Res.">
        <title>Expression of myosin regulatory light chains in rat brain: characterization of a novel isoform.</title>
        <authorList>
            <person name="Feinstein D.L."/>
            <person name="Durand M."/>
            <person name="Milner R.J."/>
        </authorList>
    </citation>
    <scope>NUCLEOTIDE SEQUENCE</scope>
    <source>
        <tissue>Brain</tissue>
    </source>
</reference>
<reference key="4">
    <citation type="journal article" date="1994" name="FEBS Lett.">
        <title>Functional analysis of individual brain myosin II isoforms through hybrid formation.</title>
        <authorList>
            <person name="Wang Y."/>
            <person name="Chantler P.D."/>
        </authorList>
    </citation>
    <scope>NUCLEOTIDE SEQUENCE [MRNA]</scope>
    <source>
        <tissue>Brain</tissue>
    </source>
</reference>
<organism>
    <name type="scientific">Rattus norvegicus</name>
    <name type="common">Rat</name>
    <dbReference type="NCBI Taxonomy" id="10116"/>
    <lineage>
        <taxon>Eukaryota</taxon>
        <taxon>Metazoa</taxon>
        <taxon>Chordata</taxon>
        <taxon>Craniata</taxon>
        <taxon>Vertebrata</taxon>
        <taxon>Euteleostomi</taxon>
        <taxon>Mammalia</taxon>
        <taxon>Eutheria</taxon>
        <taxon>Euarchontoglires</taxon>
        <taxon>Glires</taxon>
        <taxon>Rodentia</taxon>
        <taxon>Myomorpha</taxon>
        <taxon>Muroidea</taxon>
        <taxon>Muridae</taxon>
        <taxon>Murinae</taxon>
        <taxon>Rattus</taxon>
    </lineage>
</organism>
<evidence type="ECO:0000250" key="1"/>
<evidence type="ECO:0000255" key="2">
    <source>
        <dbReference type="PROSITE-ProRule" id="PRU00448"/>
    </source>
</evidence>
<evidence type="ECO:0000256" key="3">
    <source>
        <dbReference type="SAM" id="MobiDB-lite"/>
    </source>
</evidence>
<accession>P13832</accession>
<dbReference type="EMBL" id="X05566">
    <property type="protein sequence ID" value="CAA29080.1"/>
    <property type="molecule type" value="mRNA"/>
</dbReference>
<dbReference type="EMBL" id="X54616">
    <property type="protein sequence ID" value="CAB38864.1"/>
    <property type="molecule type" value="Genomic_DNA"/>
</dbReference>
<dbReference type="EMBL" id="X54617">
    <property type="protein sequence ID" value="CAA38437.1"/>
    <property type="molecule type" value="Genomic_DNA"/>
</dbReference>
<dbReference type="EMBL" id="Z32519">
    <property type="status" value="NOT_ANNOTATED_CDS"/>
    <property type="molecule type" value="mRNA"/>
</dbReference>
<dbReference type="PIR" id="A37100">
    <property type="entry name" value="A37100"/>
</dbReference>
<dbReference type="RefSeq" id="NP_001128489.1">
    <property type="nucleotide sequence ID" value="NM_001135017.1"/>
</dbReference>
<dbReference type="RefSeq" id="XP_006245730.1">
    <property type="nucleotide sequence ID" value="XM_006245668.3"/>
</dbReference>
<dbReference type="SMR" id="P13832"/>
<dbReference type="BioGRID" id="272510">
    <property type="interactions" value="2"/>
</dbReference>
<dbReference type="CORUM" id="P13832"/>
<dbReference type="FunCoup" id="P13832">
    <property type="interactions" value="419"/>
</dbReference>
<dbReference type="IntAct" id="P13832">
    <property type="interactions" value="2"/>
</dbReference>
<dbReference type="MINT" id="P13832"/>
<dbReference type="STRING" id="10116.ENSRNOP00000021048"/>
<dbReference type="iPTMnet" id="P13832"/>
<dbReference type="PhosphoSitePlus" id="P13832"/>
<dbReference type="jPOST" id="P13832"/>
<dbReference type="PaxDb" id="10116-ENSRNOP00000021048"/>
<dbReference type="Ensembl" id="ENSRNOT00000108694.1">
    <property type="protein sequence ID" value="ENSRNOP00000096383.1"/>
    <property type="gene ID" value="ENSRNOG00000015278.8"/>
</dbReference>
<dbReference type="GeneID" id="501203"/>
<dbReference type="KEGG" id="rno:501203"/>
<dbReference type="UCSC" id="RGD:1309537">
    <property type="organism name" value="rat"/>
</dbReference>
<dbReference type="AGR" id="RGD:1309537"/>
<dbReference type="CTD" id="10627"/>
<dbReference type="eggNOG" id="KOG0031">
    <property type="taxonomic scope" value="Eukaryota"/>
</dbReference>
<dbReference type="GeneTree" id="ENSGT00940000153607"/>
<dbReference type="HOGENOM" id="CLU_061288_9_3_1"/>
<dbReference type="InParanoid" id="P13832"/>
<dbReference type="OrthoDB" id="9571582at2759"/>
<dbReference type="PhylomeDB" id="P13832"/>
<dbReference type="TreeFam" id="TF314218"/>
<dbReference type="Reactome" id="R-RNO-3928664">
    <property type="pathway name" value="Ephrin signaling"/>
</dbReference>
<dbReference type="Reactome" id="R-RNO-445355">
    <property type="pathway name" value="Smooth Muscle Contraction"/>
</dbReference>
<dbReference type="PRO" id="PR:P13832"/>
<dbReference type="Proteomes" id="UP000002494">
    <property type="component" value="Chromosome 9"/>
</dbReference>
<dbReference type="Bgee" id="ENSRNOG00000015278">
    <property type="expression patterns" value="Expressed in lung and 20 other cell types or tissues"/>
</dbReference>
<dbReference type="GO" id="GO:0005737">
    <property type="term" value="C:cytoplasm"/>
    <property type="evidence" value="ECO:0000318"/>
    <property type="project" value="GO_Central"/>
</dbReference>
<dbReference type="GO" id="GO:0016460">
    <property type="term" value="C:myosin II complex"/>
    <property type="evidence" value="ECO:0000318"/>
    <property type="project" value="GO_Central"/>
</dbReference>
<dbReference type="GO" id="GO:0005509">
    <property type="term" value="F:calcium ion binding"/>
    <property type="evidence" value="ECO:0007669"/>
    <property type="project" value="InterPro"/>
</dbReference>
<dbReference type="GO" id="GO:0032036">
    <property type="term" value="F:myosin heavy chain binding"/>
    <property type="evidence" value="ECO:0000318"/>
    <property type="project" value="GO_Central"/>
</dbReference>
<dbReference type="CDD" id="cd00051">
    <property type="entry name" value="EFh"/>
    <property type="match status" value="1"/>
</dbReference>
<dbReference type="FunFam" id="1.10.238.10:FF:000010">
    <property type="entry name" value="Myosin regulatory light chain 2, atrial isoform"/>
    <property type="match status" value="1"/>
</dbReference>
<dbReference type="FunFam" id="1.10.238.10:FF:000007">
    <property type="entry name" value="Putative myosin regulatory light chain sqh"/>
    <property type="match status" value="1"/>
</dbReference>
<dbReference type="Gene3D" id="1.10.238.10">
    <property type="entry name" value="EF-hand"/>
    <property type="match status" value="2"/>
</dbReference>
<dbReference type="InterPro" id="IPR011992">
    <property type="entry name" value="EF-hand-dom_pair"/>
</dbReference>
<dbReference type="InterPro" id="IPR018247">
    <property type="entry name" value="EF_Hand_1_Ca_BS"/>
</dbReference>
<dbReference type="InterPro" id="IPR002048">
    <property type="entry name" value="EF_hand_dom"/>
</dbReference>
<dbReference type="InterPro" id="IPR050403">
    <property type="entry name" value="Myosin_RLC"/>
</dbReference>
<dbReference type="PANTHER" id="PTHR23049">
    <property type="entry name" value="MYOSIN REGULATORY LIGHT CHAIN 2"/>
    <property type="match status" value="1"/>
</dbReference>
<dbReference type="Pfam" id="PF13499">
    <property type="entry name" value="EF-hand_7"/>
    <property type="match status" value="1"/>
</dbReference>
<dbReference type="SMART" id="SM00054">
    <property type="entry name" value="EFh"/>
    <property type="match status" value="2"/>
</dbReference>
<dbReference type="SUPFAM" id="SSF47473">
    <property type="entry name" value="EF-hand"/>
    <property type="match status" value="1"/>
</dbReference>
<dbReference type="PROSITE" id="PS00018">
    <property type="entry name" value="EF_HAND_1"/>
    <property type="match status" value="1"/>
</dbReference>
<dbReference type="PROSITE" id="PS50222">
    <property type="entry name" value="EF_HAND_2"/>
    <property type="match status" value="3"/>
</dbReference>
<name>MRLCA_RAT</name>
<gene>
    <name type="primary">Rlc-a</name>
</gene>
<keyword id="KW-0106">Calcium</keyword>
<keyword id="KW-0479">Metal-binding</keyword>
<keyword id="KW-0505">Motor protein</keyword>
<keyword id="KW-0514">Muscle protein</keyword>
<keyword id="KW-0518">Myosin</keyword>
<keyword id="KW-0597">Phosphoprotein</keyword>
<keyword id="KW-1185">Reference proteome</keyword>
<keyword id="KW-0677">Repeat</keyword>
<feature type="chain" id="PRO_0000198739" description="Myosin regulatory light chain RLC-A">
    <location>
        <begin position="1"/>
        <end position="172"/>
    </location>
</feature>
<feature type="domain" description="EF-hand 1" evidence="2">
    <location>
        <begin position="29"/>
        <end position="64"/>
    </location>
</feature>
<feature type="domain" description="EF-hand 2" evidence="2">
    <location>
        <begin position="98"/>
        <end position="133"/>
    </location>
</feature>
<feature type="domain" description="EF-hand 3" evidence="2">
    <location>
        <begin position="134"/>
        <end position="169"/>
    </location>
</feature>
<feature type="region of interest" description="Disordered" evidence="3">
    <location>
        <begin position="1"/>
        <end position="20"/>
    </location>
</feature>
<feature type="compositionally biased region" description="Basic residues" evidence="3">
    <location>
        <begin position="1"/>
        <end position="16"/>
    </location>
</feature>
<feature type="binding site" evidence="2">
    <location>
        <position position="42"/>
    </location>
    <ligand>
        <name>Ca(2+)</name>
        <dbReference type="ChEBI" id="CHEBI:29108"/>
    </ligand>
</feature>
<feature type="binding site" evidence="2">
    <location>
        <position position="44"/>
    </location>
    <ligand>
        <name>Ca(2+)</name>
        <dbReference type="ChEBI" id="CHEBI:29108"/>
    </ligand>
</feature>
<feature type="binding site" evidence="2">
    <location>
        <position position="46"/>
    </location>
    <ligand>
        <name>Ca(2+)</name>
        <dbReference type="ChEBI" id="CHEBI:29108"/>
    </ligand>
</feature>
<feature type="binding site" evidence="2">
    <location>
        <position position="53"/>
    </location>
    <ligand>
        <name>Ca(2+)</name>
        <dbReference type="ChEBI" id="CHEBI:29108"/>
    </ligand>
</feature>
<feature type="modified residue" description="Phosphothreonine; by MLCK" evidence="1">
    <location>
        <position position="19"/>
    </location>
</feature>
<feature type="modified residue" description="Phosphoserine; by MLCK" evidence="1">
    <location>
        <position position="20"/>
    </location>
</feature>
<proteinExistence type="evidence at transcript level"/>
<protein>
    <recommendedName>
        <fullName>Myosin regulatory light chain RLC-A</fullName>
        <shortName>Myosin RLC-A</shortName>
    </recommendedName>
    <alternativeName>
        <fullName>Myosin regulatory light chain 2-A, smooth muscle isoform</fullName>
    </alternativeName>
</protein>
<sequence length="172" mass="19895">MSSKRAKTKTTKKRPQRATSNVFAMFDQSQIQEFKEAFNMIDQNRDGFIDKEDLHDMLASMGKNPTDEYLDAMMNEAPGPINFTMFLTMFGEKLNGTDPEDVIRNAFACFDEEAIGTIQEDYLRELLTTMGDRFTDEEVDELYREAPIDKKGNFNYIEFTRILKHGAKDKDD</sequence>
<comment type="function">
    <text evidence="1">Myosin regulatory subunit that plays an important role in regulation of both smooth muscle and nonmuscle cell contractile activity via its phosphorylation. Implicated in cytokinesis, receptor capping, and cell locomotion (By similarity).</text>
</comment>
<comment type="subunit">
    <text evidence="1">Myosin is a hexamer of 2 heavy chains and 4 light chains.</text>
</comment>
<comment type="PTM">
    <text evidence="1">Phosphorylation increases the actin-activated myosin ATPase activity and thereby regulates the contractile activity.</text>
</comment>
<comment type="miscellaneous">
    <text>This chain binds calcium.</text>
</comment>